<reference key="1">
    <citation type="journal article" date="2007" name="Genome Biol.">
        <title>Comparison of Francisella tularensis genomes reveals evolutionary events associated with the emergence of human pathogenic strains.</title>
        <authorList>
            <person name="Rohmer L."/>
            <person name="Fong C."/>
            <person name="Abmayr S."/>
            <person name="Wasnick M."/>
            <person name="Larson Freeman T.J."/>
            <person name="Radey M."/>
            <person name="Guina T."/>
            <person name="Svensson K."/>
            <person name="Hayden H.S."/>
            <person name="Jacobs M."/>
            <person name="Gallagher L.A."/>
            <person name="Manoil C."/>
            <person name="Ernst R.K."/>
            <person name="Drees B."/>
            <person name="Buckley D."/>
            <person name="Haugen E."/>
            <person name="Bovee D."/>
            <person name="Zhou Y."/>
            <person name="Chang J."/>
            <person name="Levy R."/>
            <person name="Lim R."/>
            <person name="Gillett W."/>
            <person name="Guenthener D."/>
            <person name="Kang A."/>
            <person name="Shaffer S.A."/>
            <person name="Taylor G."/>
            <person name="Chen J."/>
            <person name="Gallis B."/>
            <person name="D'Argenio D.A."/>
            <person name="Forsman M."/>
            <person name="Olson M.V."/>
            <person name="Goodlett D.R."/>
            <person name="Kaul R."/>
            <person name="Miller S.I."/>
            <person name="Brittnacher M.J."/>
        </authorList>
    </citation>
    <scope>NUCLEOTIDE SEQUENCE [LARGE SCALE GENOMIC DNA]</scope>
    <source>
        <strain>U112</strain>
    </source>
</reference>
<accession>A0Q6H0</accession>
<name>RLMN_FRATN</name>
<sequence length="370" mass="41462">MQQDKVNLLGLNQKAIEDFFISIGEKKFHARQVFKWIHKKGVIDFDAMTDLGKNLRHKLKEKAQITIPKVVFSKASKDGTHKWLIDVGGSAVETVFIPEEGRGTLCVSSQVGCTLNCSFCSTGKQGFNRNLSAAEVIAQLWIAARTLSKTDGEHDFTVTNIVMMGMGEPLMNFENVVPAMDIMMDDLAYGLSRRKVTLSTSGVVPRIYDLLEQSGVSLAVSLHAPNDMLRNEIVPINKKYNIDELLEACKLYAQKGPHKHITFEYTLMEEVNDNLSDAEELVALLKSREVPAKINLIPFNPYPGTPYKKPSNNRIHRFKEFLQHNGFVTTVRKTRGDDIDAACGQLAGDVMDKTNRKQRYLKKLGDTNAN</sequence>
<keyword id="KW-0004">4Fe-4S</keyword>
<keyword id="KW-0963">Cytoplasm</keyword>
<keyword id="KW-1015">Disulfide bond</keyword>
<keyword id="KW-0408">Iron</keyword>
<keyword id="KW-0411">Iron-sulfur</keyword>
<keyword id="KW-0479">Metal-binding</keyword>
<keyword id="KW-0489">Methyltransferase</keyword>
<keyword id="KW-0698">rRNA processing</keyword>
<keyword id="KW-0949">S-adenosyl-L-methionine</keyword>
<keyword id="KW-0808">Transferase</keyword>
<keyword id="KW-0819">tRNA processing</keyword>
<gene>
    <name evidence="1" type="primary">rlmN</name>
    <name type="ordered locus">FTN_0947</name>
</gene>
<feature type="chain" id="PRO_0000350184" description="Dual-specificity RNA methyltransferase RlmN">
    <location>
        <begin position="1"/>
        <end position="370"/>
    </location>
</feature>
<feature type="domain" description="Radical SAM core" evidence="2">
    <location>
        <begin position="99"/>
        <end position="337"/>
    </location>
</feature>
<feature type="active site" description="Proton acceptor" evidence="1">
    <location>
        <position position="93"/>
    </location>
</feature>
<feature type="active site" description="S-methylcysteine intermediate" evidence="1">
    <location>
        <position position="343"/>
    </location>
</feature>
<feature type="binding site" evidence="1">
    <location>
        <position position="113"/>
    </location>
    <ligand>
        <name>[4Fe-4S] cluster</name>
        <dbReference type="ChEBI" id="CHEBI:49883"/>
        <note>4Fe-4S-S-AdoMet</note>
    </ligand>
</feature>
<feature type="binding site" evidence="1">
    <location>
        <position position="117"/>
    </location>
    <ligand>
        <name>[4Fe-4S] cluster</name>
        <dbReference type="ChEBI" id="CHEBI:49883"/>
        <note>4Fe-4S-S-AdoMet</note>
    </ligand>
</feature>
<feature type="binding site" evidence="1">
    <location>
        <position position="120"/>
    </location>
    <ligand>
        <name>[4Fe-4S] cluster</name>
        <dbReference type="ChEBI" id="CHEBI:49883"/>
        <note>4Fe-4S-S-AdoMet</note>
    </ligand>
</feature>
<feature type="binding site" evidence="1">
    <location>
        <begin position="167"/>
        <end position="168"/>
    </location>
    <ligand>
        <name>S-adenosyl-L-methionine</name>
        <dbReference type="ChEBI" id="CHEBI:59789"/>
    </ligand>
</feature>
<feature type="binding site" evidence="1">
    <location>
        <position position="199"/>
    </location>
    <ligand>
        <name>S-adenosyl-L-methionine</name>
        <dbReference type="ChEBI" id="CHEBI:59789"/>
    </ligand>
</feature>
<feature type="binding site" evidence="1">
    <location>
        <begin position="221"/>
        <end position="223"/>
    </location>
    <ligand>
        <name>S-adenosyl-L-methionine</name>
        <dbReference type="ChEBI" id="CHEBI:59789"/>
    </ligand>
</feature>
<feature type="binding site" evidence="1">
    <location>
        <position position="300"/>
    </location>
    <ligand>
        <name>S-adenosyl-L-methionine</name>
        <dbReference type="ChEBI" id="CHEBI:59789"/>
    </ligand>
</feature>
<feature type="disulfide bond" description="(transient)" evidence="1">
    <location>
        <begin position="106"/>
        <end position="343"/>
    </location>
</feature>
<protein>
    <recommendedName>
        <fullName evidence="1">Dual-specificity RNA methyltransferase RlmN</fullName>
        <ecNumber evidence="1">2.1.1.192</ecNumber>
    </recommendedName>
    <alternativeName>
        <fullName evidence="1">23S rRNA (adenine(2503)-C(2))-methyltransferase</fullName>
    </alternativeName>
    <alternativeName>
        <fullName evidence="1">23S rRNA m2A2503 methyltransferase</fullName>
    </alternativeName>
    <alternativeName>
        <fullName evidence="1">Ribosomal RNA large subunit methyltransferase N</fullName>
    </alternativeName>
    <alternativeName>
        <fullName evidence="1">tRNA (adenine(37)-C(2))-methyltransferase</fullName>
    </alternativeName>
    <alternativeName>
        <fullName evidence="1">tRNA m2A37 methyltransferase</fullName>
    </alternativeName>
</protein>
<proteinExistence type="inferred from homology"/>
<evidence type="ECO:0000255" key="1">
    <source>
        <dbReference type="HAMAP-Rule" id="MF_01849"/>
    </source>
</evidence>
<evidence type="ECO:0000255" key="2">
    <source>
        <dbReference type="PROSITE-ProRule" id="PRU01266"/>
    </source>
</evidence>
<comment type="function">
    <text evidence="1">Specifically methylates position 2 of adenine 2503 in 23S rRNA and position 2 of adenine 37 in tRNAs. m2A2503 modification seems to play a crucial role in the proofreading step occurring at the peptidyl transferase center and thus would serve to optimize ribosomal fidelity.</text>
</comment>
<comment type="catalytic activity">
    <reaction evidence="1">
        <text>adenosine(2503) in 23S rRNA + 2 reduced [2Fe-2S]-[ferredoxin] + 2 S-adenosyl-L-methionine = 2-methyladenosine(2503) in 23S rRNA + 5'-deoxyadenosine + L-methionine + 2 oxidized [2Fe-2S]-[ferredoxin] + S-adenosyl-L-homocysteine</text>
        <dbReference type="Rhea" id="RHEA:42916"/>
        <dbReference type="Rhea" id="RHEA-COMP:10000"/>
        <dbReference type="Rhea" id="RHEA-COMP:10001"/>
        <dbReference type="Rhea" id="RHEA-COMP:10152"/>
        <dbReference type="Rhea" id="RHEA-COMP:10282"/>
        <dbReference type="ChEBI" id="CHEBI:17319"/>
        <dbReference type="ChEBI" id="CHEBI:33737"/>
        <dbReference type="ChEBI" id="CHEBI:33738"/>
        <dbReference type="ChEBI" id="CHEBI:57844"/>
        <dbReference type="ChEBI" id="CHEBI:57856"/>
        <dbReference type="ChEBI" id="CHEBI:59789"/>
        <dbReference type="ChEBI" id="CHEBI:74411"/>
        <dbReference type="ChEBI" id="CHEBI:74497"/>
        <dbReference type="EC" id="2.1.1.192"/>
    </reaction>
</comment>
<comment type="catalytic activity">
    <reaction evidence="1">
        <text>adenosine(37) in tRNA + 2 reduced [2Fe-2S]-[ferredoxin] + 2 S-adenosyl-L-methionine = 2-methyladenosine(37) in tRNA + 5'-deoxyadenosine + L-methionine + 2 oxidized [2Fe-2S]-[ferredoxin] + S-adenosyl-L-homocysteine</text>
        <dbReference type="Rhea" id="RHEA:43332"/>
        <dbReference type="Rhea" id="RHEA-COMP:10000"/>
        <dbReference type="Rhea" id="RHEA-COMP:10001"/>
        <dbReference type="Rhea" id="RHEA-COMP:10162"/>
        <dbReference type="Rhea" id="RHEA-COMP:10485"/>
        <dbReference type="ChEBI" id="CHEBI:17319"/>
        <dbReference type="ChEBI" id="CHEBI:33737"/>
        <dbReference type="ChEBI" id="CHEBI:33738"/>
        <dbReference type="ChEBI" id="CHEBI:57844"/>
        <dbReference type="ChEBI" id="CHEBI:57856"/>
        <dbReference type="ChEBI" id="CHEBI:59789"/>
        <dbReference type="ChEBI" id="CHEBI:74411"/>
        <dbReference type="ChEBI" id="CHEBI:74497"/>
        <dbReference type="EC" id="2.1.1.192"/>
    </reaction>
</comment>
<comment type="cofactor">
    <cofactor evidence="1">
        <name>[4Fe-4S] cluster</name>
        <dbReference type="ChEBI" id="CHEBI:49883"/>
    </cofactor>
    <text evidence="1">Binds 1 [4Fe-4S] cluster. The cluster is coordinated with 3 cysteines and an exchangeable S-adenosyl-L-methionine.</text>
</comment>
<comment type="subcellular location">
    <subcellularLocation>
        <location evidence="1">Cytoplasm</location>
    </subcellularLocation>
</comment>
<comment type="miscellaneous">
    <text evidence="1">Reaction proceeds by a ping-pong mechanism involving intermediate methylation of a conserved cysteine residue.</text>
</comment>
<comment type="similarity">
    <text evidence="1">Belongs to the radical SAM superfamily. RlmN family.</text>
</comment>
<dbReference type="EC" id="2.1.1.192" evidence="1"/>
<dbReference type="EMBL" id="CP000439">
    <property type="protein sequence ID" value="ABK89835.1"/>
    <property type="molecule type" value="Genomic_DNA"/>
</dbReference>
<dbReference type="RefSeq" id="WP_003033905.1">
    <property type="nucleotide sequence ID" value="NZ_CP009633.1"/>
</dbReference>
<dbReference type="SMR" id="A0Q6H0"/>
<dbReference type="KEGG" id="ftn:FTN_0947"/>
<dbReference type="KEGG" id="ftx:AW25_1065"/>
<dbReference type="BioCyc" id="FTUL401614:G1G75-987-MONOMER"/>
<dbReference type="Proteomes" id="UP000000762">
    <property type="component" value="Chromosome"/>
</dbReference>
<dbReference type="GO" id="GO:0005737">
    <property type="term" value="C:cytoplasm"/>
    <property type="evidence" value="ECO:0007669"/>
    <property type="project" value="UniProtKB-SubCell"/>
</dbReference>
<dbReference type="GO" id="GO:0051539">
    <property type="term" value="F:4 iron, 4 sulfur cluster binding"/>
    <property type="evidence" value="ECO:0007669"/>
    <property type="project" value="UniProtKB-UniRule"/>
</dbReference>
<dbReference type="GO" id="GO:0046872">
    <property type="term" value="F:metal ion binding"/>
    <property type="evidence" value="ECO:0007669"/>
    <property type="project" value="UniProtKB-KW"/>
</dbReference>
<dbReference type="GO" id="GO:0070040">
    <property type="term" value="F:rRNA (adenine(2503)-C2-)-methyltransferase activity"/>
    <property type="evidence" value="ECO:0007669"/>
    <property type="project" value="UniProtKB-UniRule"/>
</dbReference>
<dbReference type="GO" id="GO:0019843">
    <property type="term" value="F:rRNA binding"/>
    <property type="evidence" value="ECO:0007669"/>
    <property type="project" value="UniProtKB-UniRule"/>
</dbReference>
<dbReference type="GO" id="GO:0002935">
    <property type="term" value="F:tRNA (adenine(37)-C2)-methyltransferase activity"/>
    <property type="evidence" value="ECO:0007669"/>
    <property type="project" value="UniProtKB-UniRule"/>
</dbReference>
<dbReference type="GO" id="GO:0000049">
    <property type="term" value="F:tRNA binding"/>
    <property type="evidence" value="ECO:0007669"/>
    <property type="project" value="UniProtKB-UniRule"/>
</dbReference>
<dbReference type="GO" id="GO:0070475">
    <property type="term" value="P:rRNA base methylation"/>
    <property type="evidence" value="ECO:0007669"/>
    <property type="project" value="UniProtKB-UniRule"/>
</dbReference>
<dbReference type="GO" id="GO:0030488">
    <property type="term" value="P:tRNA methylation"/>
    <property type="evidence" value="ECO:0007669"/>
    <property type="project" value="UniProtKB-UniRule"/>
</dbReference>
<dbReference type="CDD" id="cd01335">
    <property type="entry name" value="Radical_SAM"/>
    <property type="match status" value="1"/>
</dbReference>
<dbReference type="FunFam" id="1.10.150.530:FF:000003">
    <property type="entry name" value="Dual-specificity RNA methyltransferase RlmN"/>
    <property type="match status" value="1"/>
</dbReference>
<dbReference type="FunFam" id="3.20.20.70:FF:000008">
    <property type="entry name" value="Dual-specificity RNA methyltransferase RlmN"/>
    <property type="match status" value="1"/>
</dbReference>
<dbReference type="Gene3D" id="1.10.150.530">
    <property type="match status" value="1"/>
</dbReference>
<dbReference type="Gene3D" id="3.20.20.70">
    <property type="entry name" value="Aldolase class I"/>
    <property type="match status" value="1"/>
</dbReference>
<dbReference type="HAMAP" id="MF_01849">
    <property type="entry name" value="RNA_methyltr_RlmN"/>
    <property type="match status" value="1"/>
</dbReference>
<dbReference type="InterPro" id="IPR013785">
    <property type="entry name" value="Aldolase_TIM"/>
</dbReference>
<dbReference type="InterPro" id="IPR006638">
    <property type="entry name" value="Elp3/MiaA/NifB-like_rSAM"/>
</dbReference>
<dbReference type="InterPro" id="IPR040072">
    <property type="entry name" value="Methyltransferase_A"/>
</dbReference>
<dbReference type="InterPro" id="IPR048641">
    <property type="entry name" value="RlmN_N"/>
</dbReference>
<dbReference type="InterPro" id="IPR027492">
    <property type="entry name" value="RNA_MTrfase_RlmN"/>
</dbReference>
<dbReference type="InterPro" id="IPR004383">
    <property type="entry name" value="rRNA_lsu_MTrfase_RlmN/Cfr"/>
</dbReference>
<dbReference type="InterPro" id="IPR007197">
    <property type="entry name" value="rSAM"/>
</dbReference>
<dbReference type="NCBIfam" id="TIGR00048">
    <property type="entry name" value="rRNA_mod_RlmN"/>
    <property type="match status" value="1"/>
</dbReference>
<dbReference type="PANTHER" id="PTHR30544">
    <property type="entry name" value="23S RRNA METHYLTRANSFERASE"/>
    <property type="match status" value="1"/>
</dbReference>
<dbReference type="PANTHER" id="PTHR30544:SF5">
    <property type="entry name" value="RADICAL SAM CORE DOMAIN-CONTAINING PROTEIN"/>
    <property type="match status" value="1"/>
</dbReference>
<dbReference type="Pfam" id="PF04055">
    <property type="entry name" value="Radical_SAM"/>
    <property type="match status" value="1"/>
</dbReference>
<dbReference type="Pfam" id="PF21016">
    <property type="entry name" value="RlmN_N"/>
    <property type="match status" value="1"/>
</dbReference>
<dbReference type="PIRSF" id="PIRSF006004">
    <property type="entry name" value="CHP00048"/>
    <property type="match status" value="1"/>
</dbReference>
<dbReference type="SFLD" id="SFLDF00275">
    <property type="entry name" value="adenosine_C2_methyltransferase"/>
    <property type="match status" value="1"/>
</dbReference>
<dbReference type="SFLD" id="SFLDG01082">
    <property type="entry name" value="B12-binding_domain_containing"/>
    <property type="match status" value="1"/>
</dbReference>
<dbReference type="SFLD" id="SFLDS00029">
    <property type="entry name" value="Radical_SAM"/>
    <property type="match status" value="1"/>
</dbReference>
<dbReference type="SMART" id="SM00729">
    <property type="entry name" value="Elp3"/>
    <property type="match status" value="1"/>
</dbReference>
<dbReference type="SUPFAM" id="SSF102114">
    <property type="entry name" value="Radical SAM enzymes"/>
    <property type="match status" value="1"/>
</dbReference>
<dbReference type="PROSITE" id="PS51918">
    <property type="entry name" value="RADICAL_SAM"/>
    <property type="match status" value="1"/>
</dbReference>
<organism>
    <name type="scientific">Francisella tularensis subsp. novicida (strain U112)</name>
    <dbReference type="NCBI Taxonomy" id="401614"/>
    <lineage>
        <taxon>Bacteria</taxon>
        <taxon>Pseudomonadati</taxon>
        <taxon>Pseudomonadota</taxon>
        <taxon>Gammaproteobacteria</taxon>
        <taxon>Thiotrichales</taxon>
        <taxon>Francisellaceae</taxon>
        <taxon>Francisella</taxon>
    </lineage>
</organism>